<proteinExistence type="inferred from homology"/>
<protein>
    <recommendedName>
        <fullName evidence="2">Glutathione-regulated potassium-efflux system protein KefC</fullName>
    </recommendedName>
    <alternativeName>
        <fullName evidence="2">K(+)/H(+) antiporter</fullName>
    </alternativeName>
</protein>
<sequence length="620" mass="67653">MDSHTLVQALIYLGSAALIVPIAVRLGLGSVLGYLIAGCIIGPWGLRLVTDAESILHFAEIGVVLMLFIIGLELDPQRLWKLRAAVFGGGALQMVICGGLLGLFCMLLGLRWQVAELIGMTLALSSTAIAMQAMNERNLMVTQMGRSAFAVLLFQDIAAIPLVAMIPLLAASSASTTMGAFALSALKVAGALVLVVLLGRYVTRPALRFVARSGLREVFSAVALFLVFGFGLLLEEVGLSMAMGAFLAGVLLASSEYRHALESDIEPFKGLLLGLFFIGVGMSIDFGTLIENPLRIVILLLGFLIIKIAMLWLIARPLQVPNKQRRWFAVLLGQGSEFAFVVFGAAQMANVLEPEWAKSLTLAVALSMAATPILLVILNRLEQSSTEEAREADEIDEEQPRVIIAGFGRFGQITGRLLLSSGVKMVVLDHDPDHIETLRKFGMKVFYGDATRMDLLESAGAAKAEVLINAIDDPQTNLQLTEMVKEHFPHLQIIARARDVDHYICLRQAGVEKPERETFEGALKTGRLALESLGLGPYEARERADVFRRFNIQMVEEMAMVENDTKARAAVYKRTSAMLSEIITEDREHLSLIQRHGWQGTEEGKHTGNMADEPETKPSS</sequence>
<reference key="1">
    <citation type="journal article" date="2001" name="Nature">
        <title>Genome sequence of enterohaemorrhagic Escherichia coli O157:H7.</title>
        <authorList>
            <person name="Perna N.T."/>
            <person name="Plunkett G. III"/>
            <person name="Burland V."/>
            <person name="Mau B."/>
            <person name="Glasner J.D."/>
            <person name="Rose D.J."/>
            <person name="Mayhew G.F."/>
            <person name="Evans P.S."/>
            <person name="Gregor J."/>
            <person name="Kirkpatrick H.A."/>
            <person name="Posfai G."/>
            <person name="Hackett J."/>
            <person name="Klink S."/>
            <person name="Boutin A."/>
            <person name="Shao Y."/>
            <person name="Miller L."/>
            <person name="Grotbeck E.J."/>
            <person name="Davis N.W."/>
            <person name="Lim A."/>
            <person name="Dimalanta E.T."/>
            <person name="Potamousis K."/>
            <person name="Apodaca J."/>
            <person name="Anantharaman T.S."/>
            <person name="Lin J."/>
            <person name="Yen G."/>
            <person name="Schwartz D.C."/>
            <person name="Welch R.A."/>
            <person name="Blattner F.R."/>
        </authorList>
    </citation>
    <scope>NUCLEOTIDE SEQUENCE [LARGE SCALE GENOMIC DNA]</scope>
    <source>
        <strain>O157:H7 / EDL933 / ATCC 700927 / EHEC</strain>
    </source>
</reference>
<reference key="2">
    <citation type="journal article" date="2001" name="DNA Res.">
        <title>Complete genome sequence of enterohemorrhagic Escherichia coli O157:H7 and genomic comparison with a laboratory strain K-12.</title>
        <authorList>
            <person name="Hayashi T."/>
            <person name="Makino K."/>
            <person name="Ohnishi M."/>
            <person name="Kurokawa K."/>
            <person name="Ishii K."/>
            <person name="Yokoyama K."/>
            <person name="Han C.-G."/>
            <person name="Ohtsubo E."/>
            <person name="Nakayama K."/>
            <person name="Murata T."/>
            <person name="Tanaka M."/>
            <person name="Tobe T."/>
            <person name="Iida T."/>
            <person name="Takami H."/>
            <person name="Honda T."/>
            <person name="Sasakawa C."/>
            <person name="Ogasawara N."/>
            <person name="Yasunaga T."/>
            <person name="Kuhara S."/>
            <person name="Shiba T."/>
            <person name="Hattori M."/>
            <person name="Shinagawa H."/>
        </authorList>
    </citation>
    <scope>NUCLEOTIDE SEQUENCE [LARGE SCALE GENOMIC DNA]</scope>
    <source>
        <strain>O157:H7 / Sakai / RIMD 0509952 / EHEC</strain>
    </source>
</reference>
<keyword id="KW-0050">Antiport</keyword>
<keyword id="KW-0997">Cell inner membrane</keyword>
<keyword id="KW-1003">Cell membrane</keyword>
<keyword id="KW-0406">Ion transport</keyword>
<keyword id="KW-0472">Membrane</keyword>
<keyword id="KW-0630">Potassium</keyword>
<keyword id="KW-0633">Potassium transport</keyword>
<keyword id="KW-1185">Reference proteome</keyword>
<keyword id="KW-0812">Transmembrane</keyword>
<keyword id="KW-1133">Transmembrane helix</keyword>
<keyword id="KW-0813">Transport</keyword>
<organism>
    <name type="scientific">Escherichia coli O157:H7</name>
    <dbReference type="NCBI Taxonomy" id="83334"/>
    <lineage>
        <taxon>Bacteria</taxon>
        <taxon>Pseudomonadati</taxon>
        <taxon>Pseudomonadota</taxon>
        <taxon>Gammaproteobacteria</taxon>
        <taxon>Enterobacterales</taxon>
        <taxon>Enterobacteriaceae</taxon>
        <taxon>Escherichia</taxon>
    </lineage>
</organism>
<feature type="chain" id="PRO_0000196608" description="Glutathione-regulated potassium-efflux system protein KefC">
    <location>
        <begin position="1"/>
        <end position="620"/>
    </location>
</feature>
<feature type="topological domain" description="Periplasmic" evidence="1">
    <location>
        <begin position="1"/>
        <end position="3"/>
    </location>
</feature>
<feature type="transmembrane region" description="Helical" evidence="2">
    <location>
        <begin position="4"/>
        <end position="24"/>
    </location>
</feature>
<feature type="topological domain" description="Cytoplasmic" evidence="1">
    <location>
        <position position="25"/>
    </location>
</feature>
<feature type="transmembrane region" description="Helical" evidence="2">
    <location>
        <begin position="26"/>
        <end position="46"/>
    </location>
</feature>
<feature type="topological domain" description="Periplasmic" evidence="1">
    <location>
        <begin position="47"/>
        <end position="53"/>
    </location>
</feature>
<feature type="transmembrane region" description="Helical" evidence="2">
    <location>
        <begin position="54"/>
        <end position="74"/>
    </location>
</feature>
<feature type="topological domain" description="Cytoplasmic" evidence="1">
    <location>
        <begin position="75"/>
        <end position="89"/>
    </location>
</feature>
<feature type="transmembrane region" description="Helical" evidence="2">
    <location>
        <begin position="90"/>
        <end position="110"/>
    </location>
</feature>
<feature type="topological domain" description="Periplasmic" evidence="1">
    <location>
        <begin position="111"/>
        <end position="113"/>
    </location>
</feature>
<feature type="transmembrane region" description="Helical" evidence="2">
    <location>
        <begin position="114"/>
        <end position="134"/>
    </location>
</feature>
<feature type="topological domain" description="Cytoplasmic" evidence="1">
    <location>
        <begin position="135"/>
        <end position="148"/>
    </location>
</feature>
<feature type="transmembrane region" description="Helical" evidence="2">
    <location>
        <begin position="149"/>
        <end position="169"/>
    </location>
</feature>
<feature type="topological domain" description="Periplasmic" evidence="1">
    <location>
        <begin position="170"/>
        <end position="177"/>
    </location>
</feature>
<feature type="transmembrane region" description="Helical" evidence="2">
    <location>
        <begin position="178"/>
        <end position="198"/>
    </location>
</feature>
<feature type="topological domain" description="Cytoplasmic" evidence="1">
    <location>
        <begin position="199"/>
        <end position="213"/>
    </location>
</feature>
<feature type="transmembrane region" description="Helical" evidence="2">
    <location>
        <begin position="214"/>
        <end position="233"/>
    </location>
</feature>
<feature type="topological domain" description="Periplasmic" evidence="1">
    <location>
        <begin position="234"/>
        <end position="236"/>
    </location>
</feature>
<feature type="transmembrane region" description="Helical" evidence="2">
    <location>
        <begin position="237"/>
        <end position="254"/>
    </location>
</feature>
<feature type="topological domain" description="Cytoplasmic" evidence="1">
    <location>
        <begin position="255"/>
        <end position="269"/>
    </location>
</feature>
<feature type="transmembrane region" description="Helical" evidence="2">
    <location>
        <begin position="270"/>
        <end position="290"/>
    </location>
</feature>
<feature type="topological domain" description="Periplasmic" evidence="1">
    <location>
        <begin position="291"/>
        <end position="293"/>
    </location>
</feature>
<feature type="transmembrane region" description="Helical" evidence="2">
    <location>
        <begin position="294"/>
        <end position="314"/>
    </location>
</feature>
<feature type="topological domain" description="Cytoplasmic" evidence="1">
    <location>
        <begin position="315"/>
        <end position="326"/>
    </location>
</feature>
<feature type="transmembrane region" description="Helical" evidence="2">
    <location>
        <begin position="327"/>
        <end position="347"/>
    </location>
</feature>
<feature type="topological domain" description="Periplasmic" evidence="1">
    <location>
        <begin position="348"/>
        <end position="358"/>
    </location>
</feature>
<feature type="transmembrane region" description="Helical" evidence="2">
    <location>
        <begin position="359"/>
        <end position="379"/>
    </location>
</feature>
<feature type="topological domain" description="Cytoplasmic" evidence="1">
    <location>
        <begin position="380"/>
        <end position="620"/>
    </location>
</feature>
<feature type="domain" description="RCK N-terminal" evidence="3">
    <location>
        <begin position="399"/>
        <end position="518"/>
    </location>
</feature>
<feature type="region of interest" description="Disordered" evidence="4">
    <location>
        <begin position="597"/>
        <end position="620"/>
    </location>
</feature>
<evidence type="ECO:0000255" key="1"/>
<evidence type="ECO:0000255" key="2">
    <source>
        <dbReference type="HAMAP-Rule" id="MF_01413"/>
    </source>
</evidence>
<evidence type="ECO:0000255" key="3">
    <source>
        <dbReference type="PROSITE-ProRule" id="PRU00543"/>
    </source>
</evidence>
<evidence type="ECO:0000256" key="4">
    <source>
        <dbReference type="SAM" id="MobiDB-lite"/>
    </source>
</evidence>
<accession>Q8XA20</accession>
<dbReference type="EMBL" id="AE005174">
    <property type="protein sequence ID" value="AAG54350.1"/>
    <property type="molecule type" value="Genomic_DNA"/>
</dbReference>
<dbReference type="EMBL" id="BA000007">
    <property type="protein sequence ID" value="BAB33473.1"/>
    <property type="molecule type" value="Genomic_DNA"/>
</dbReference>
<dbReference type="PIR" id="B85486">
    <property type="entry name" value="B85486"/>
</dbReference>
<dbReference type="PIR" id="B90635">
    <property type="entry name" value="B90635"/>
</dbReference>
<dbReference type="RefSeq" id="NP_308077.1">
    <property type="nucleotide sequence ID" value="NC_002695.1"/>
</dbReference>
<dbReference type="RefSeq" id="WP_000377184.1">
    <property type="nucleotide sequence ID" value="NZ_VOAI01000002.1"/>
</dbReference>
<dbReference type="SMR" id="Q8XA20"/>
<dbReference type="STRING" id="155864.Z0053"/>
<dbReference type="GeneID" id="913449"/>
<dbReference type="KEGG" id="ece:Z0053"/>
<dbReference type="KEGG" id="ecs:ECs_0050"/>
<dbReference type="PATRIC" id="fig|386585.9.peg.149"/>
<dbReference type="eggNOG" id="COG0475">
    <property type="taxonomic scope" value="Bacteria"/>
</dbReference>
<dbReference type="eggNOG" id="COG1226">
    <property type="taxonomic scope" value="Bacteria"/>
</dbReference>
<dbReference type="HOGENOM" id="CLU_005126_9_3_6"/>
<dbReference type="OMA" id="TFIGANQ"/>
<dbReference type="Proteomes" id="UP000000558">
    <property type="component" value="Chromosome"/>
</dbReference>
<dbReference type="Proteomes" id="UP000002519">
    <property type="component" value="Chromosome"/>
</dbReference>
<dbReference type="GO" id="GO:0005886">
    <property type="term" value="C:plasma membrane"/>
    <property type="evidence" value="ECO:0007669"/>
    <property type="project" value="UniProtKB-SubCell"/>
</dbReference>
<dbReference type="GO" id="GO:0019899">
    <property type="term" value="F:enzyme binding"/>
    <property type="evidence" value="ECO:0007669"/>
    <property type="project" value="InterPro"/>
</dbReference>
<dbReference type="GO" id="GO:0015503">
    <property type="term" value="F:glutathione-regulated potassium exporter activity"/>
    <property type="evidence" value="ECO:0007669"/>
    <property type="project" value="UniProtKB-UniRule"/>
</dbReference>
<dbReference type="GO" id="GO:0015643">
    <property type="term" value="F:toxic substance binding"/>
    <property type="evidence" value="ECO:0007669"/>
    <property type="project" value="InterPro"/>
</dbReference>
<dbReference type="GO" id="GO:1902600">
    <property type="term" value="P:proton transmembrane transport"/>
    <property type="evidence" value="ECO:0007669"/>
    <property type="project" value="InterPro"/>
</dbReference>
<dbReference type="GO" id="GO:0051595">
    <property type="term" value="P:response to methylglyoxal"/>
    <property type="evidence" value="ECO:0007669"/>
    <property type="project" value="InterPro"/>
</dbReference>
<dbReference type="FunFam" id="1.20.1530.20:FF:000001">
    <property type="entry name" value="Glutathione-regulated potassium-efflux system protein KefB"/>
    <property type="match status" value="1"/>
</dbReference>
<dbReference type="FunFam" id="3.40.50.720:FF:000036">
    <property type="entry name" value="Glutathione-regulated potassium-efflux system protein KefB"/>
    <property type="match status" value="1"/>
</dbReference>
<dbReference type="Gene3D" id="1.20.1530.20">
    <property type="match status" value="1"/>
</dbReference>
<dbReference type="Gene3D" id="3.40.50.720">
    <property type="entry name" value="NAD(P)-binding Rossmann-like Domain"/>
    <property type="match status" value="1"/>
</dbReference>
<dbReference type="HAMAP" id="MF_01413">
    <property type="entry name" value="K_H_efflux_KefC"/>
    <property type="match status" value="1"/>
</dbReference>
<dbReference type="InterPro" id="IPR006153">
    <property type="entry name" value="Cation/H_exchanger_TM"/>
</dbReference>
<dbReference type="InterPro" id="IPR004771">
    <property type="entry name" value="K/H_exchanger"/>
</dbReference>
<dbReference type="InterPro" id="IPR023941">
    <property type="entry name" value="K_H_efflux_KefC"/>
</dbReference>
<dbReference type="InterPro" id="IPR006036">
    <property type="entry name" value="K_uptake_TrkA"/>
</dbReference>
<dbReference type="InterPro" id="IPR038770">
    <property type="entry name" value="Na+/solute_symporter_sf"/>
</dbReference>
<dbReference type="InterPro" id="IPR036291">
    <property type="entry name" value="NAD(P)-bd_dom_sf"/>
</dbReference>
<dbReference type="InterPro" id="IPR003148">
    <property type="entry name" value="RCK_N"/>
</dbReference>
<dbReference type="NCBIfam" id="TIGR00932">
    <property type="entry name" value="2a37"/>
    <property type="match status" value="1"/>
</dbReference>
<dbReference type="NCBIfam" id="NF002924">
    <property type="entry name" value="PRK03562.1"/>
    <property type="match status" value="1"/>
</dbReference>
<dbReference type="PANTHER" id="PTHR46157:SF3">
    <property type="entry name" value="GLUTATHIONE-REGULATED POTASSIUM-EFFLUX SYSTEM PROTEIN KEFC"/>
    <property type="match status" value="1"/>
</dbReference>
<dbReference type="PANTHER" id="PTHR46157">
    <property type="entry name" value="K(+) EFFLUX ANTIPORTER 3, CHLOROPLASTIC"/>
    <property type="match status" value="1"/>
</dbReference>
<dbReference type="Pfam" id="PF00999">
    <property type="entry name" value="Na_H_Exchanger"/>
    <property type="match status" value="1"/>
</dbReference>
<dbReference type="Pfam" id="PF02254">
    <property type="entry name" value="TrkA_N"/>
    <property type="match status" value="1"/>
</dbReference>
<dbReference type="PRINTS" id="PR00335">
    <property type="entry name" value="KUPTAKETRKA"/>
</dbReference>
<dbReference type="SUPFAM" id="SSF51735">
    <property type="entry name" value="NAD(P)-binding Rossmann-fold domains"/>
    <property type="match status" value="1"/>
</dbReference>
<dbReference type="PROSITE" id="PS51201">
    <property type="entry name" value="RCK_N"/>
    <property type="match status" value="1"/>
</dbReference>
<name>KEFC_ECO57</name>
<comment type="function">
    <text evidence="2">Pore-forming subunit of a potassium efflux system that confers protection against electrophiles. Catalyzes K(+)/H(+) antiport.</text>
</comment>
<comment type="subunit">
    <text evidence="2">Homodimer. Interacts with the regulatory subunit KefF.</text>
</comment>
<comment type="subcellular location">
    <subcellularLocation>
        <location evidence="2">Cell inner membrane</location>
        <topology evidence="2">Multi-pass membrane protein</topology>
    </subcellularLocation>
</comment>
<comment type="similarity">
    <text evidence="2">Belongs to the monovalent cation:proton antiporter 2 (CPA2) transporter (TC 2.A.37) family. KefC subfamily.</text>
</comment>
<gene>
    <name evidence="2" type="primary">kefC</name>
    <name type="ordered locus">Z0053</name>
    <name type="ordered locus">ECs0050</name>
</gene>